<sequence length="734" mass="81931">MTSFLTSRFGGLALRNVMNNKNGINSFGLRCFSTNSVSGLRNIGISAHIDSGKTTLTERILYYTGRIKEIHEVRGKDGVGAKMDSMDLEREKGITIQSAATYCKWGENHINIIDTPGHVDFTIEVERALRVLDGAVLVMCGVSGVQSQTITVDRQMRRYNVPRVVFINKLDRTGANPWNVIEQLRKKLNLNAIALQVPIGKESNLEGVIDLVTEKAMIFGEKGTAPIIEEIPSNFVEFVKEKKMELVETIANVDDELGEWMIENDFPNNMPDEKTLTAAIRRTTIARKVVPVMMGSAFKNTGVQPLLDGVIKYLPSPNEKKIIALDTSVKDKETEVELESDPKKPFVGLAFKLEEGRFGQLTYMRVYQGTLKRGDTIKNVNLGKTIKVPRLVKMHASEMEEVSEVGPGEICAMFGVDCYSGNTFTHQNCSYTMTSMHVPEPVMSLSIQPKSKDGQANFSKALSKFQKEDPTFRVKSDQESGQIIISGMGELHLEIYVERMKREYNVETVTGKPLVAYRETIQQRGDYNFTHRKQSGGQGQYAKMIGFAEQSENGMENEFVNDVIGTAIPPTFIEAIKKGFKDCIEKGPLIGHPVVGVKFVVSDGNTHSVDSSELAFRIATAGAFKEAFEDGEPTILEPIMKVEISLPQEFQGTVISGVNRRKGAIVNTTTQGESLTFECEVPLNNMFGYSTELRSMTQGKGEFSMEYLKHTNVSRELYNQLLEEYKKKRTEENK</sequence>
<comment type="function">
    <text evidence="2">Mitochondrial GTPase that catalyzes the GTP-dependent ribosomal translocation step during translation elongation. During this step, the ribosome changes from the pre-translocational (PRE) to the post-translocational (POST) state as the newly formed A-site-bound peptidyl-tRNA and P-site-bound deacylated tRNA move to the P and E sites, respectively. Catalyzes the coordinated movement of the two tRNA molecules, the mRNA and conformational changes in the ribosome.</text>
</comment>
<comment type="catalytic activity">
    <reaction evidence="1">
        <text>GTP + H2O = GDP + phosphate + H(+)</text>
        <dbReference type="Rhea" id="RHEA:19669"/>
        <dbReference type="ChEBI" id="CHEBI:15377"/>
        <dbReference type="ChEBI" id="CHEBI:15378"/>
        <dbReference type="ChEBI" id="CHEBI:37565"/>
        <dbReference type="ChEBI" id="CHEBI:43474"/>
        <dbReference type="ChEBI" id="CHEBI:58189"/>
    </reaction>
    <physiologicalReaction direction="left-to-right" evidence="1">
        <dbReference type="Rhea" id="RHEA:19670"/>
    </physiologicalReaction>
</comment>
<comment type="pathway">
    <text evidence="2">Protein biosynthesis; polypeptide chain elongation.</text>
</comment>
<comment type="subcellular location">
    <subcellularLocation>
        <location evidence="2">Mitochondrion</location>
    </subcellularLocation>
</comment>
<comment type="similarity">
    <text evidence="3">Belongs to the TRAFAC class translation factor GTPase superfamily. Classic translation factor GTPase family. EF-G/EF-2 subfamily.</text>
</comment>
<name>EFGM_DICDI</name>
<keyword id="KW-0251">Elongation factor</keyword>
<keyword id="KW-0342">GTP-binding</keyword>
<keyword id="KW-0378">Hydrolase</keyword>
<keyword id="KW-0496">Mitochondrion</keyword>
<keyword id="KW-0547">Nucleotide-binding</keyword>
<keyword id="KW-0648">Protein biosynthesis</keyword>
<keyword id="KW-1185">Reference proteome</keyword>
<keyword id="KW-0809">Transit peptide</keyword>
<gene>
    <name type="primary">gfm1</name>
    <name type="ORF">DDB_G0270482</name>
</gene>
<evidence type="ECO:0000250" key="1">
    <source>
        <dbReference type="UniProtKB" id="Q96RP9"/>
    </source>
</evidence>
<evidence type="ECO:0000255" key="2">
    <source>
        <dbReference type="HAMAP-Rule" id="MF_03061"/>
    </source>
</evidence>
<evidence type="ECO:0000305" key="3"/>
<reference key="1">
    <citation type="journal article" date="2005" name="Nature">
        <title>The genome of the social amoeba Dictyostelium discoideum.</title>
        <authorList>
            <person name="Eichinger L."/>
            <person name="Pachebat J.A."/>
            <person name="Gloeckner G."/>
            <person name="Rajandream M.A."/>
            <person name="Sucgang R."/>
            <person name="Berriman M."/>
            <person name="Song J."/>
            <person name="Olsen R."/>
            <person name="Szafranski K."/>
            <person name="Xu Q."/>
            <person name="Tunggal B."/>
            <person name="Kummerfeld S."/>
            <person name="Madera M."/>
            <person name="Konfortov B.A."/>
            <person name="Rivero F."/>
            <person name="Bankier A.T."/>
            <person name="Lehmann R."/>
            <person name="Hamlin N."/>
            <person name="Davies R."/>
            <person name="Gaudet P."/>
            <person name="Fey P."/>
            <person name="Pilcher K."/>
            <person name="Chen G."/>
            <person name="Saunders D."/>
            <person name="Sodergren E.J."/>
            <person name="Davis P."/>
            <person name="Kerhornou A."/>
            <person name="Nie X."/>
            <person name="Hall N."/>
            <person name="Anjard C."/>
            <person name="Hemphill L."/>
            <person name="Bason N."/>
            <person name="Farbrother P."/>
            <person name="Desany B."/>
            <person name="Just E."/>
            <person name="Morio T."/>
            <person name="Rost R."/>
            <person name="Churcher C.M."/>
            <person name="Cooper J."/>
            <person name="Haydock S."/>
            <person name="van Driessche N."/>
            <person name="Cronin A."/>
            <person name="Goodhead I."/>
            <person name="Muzny D.M."/>
            <person name="Mourier T."/>
            <person name="Pain A."/>
            <person name="Lu M."/>
            <person name="Harper D."/>
            <person name="Lindsay R."/>
            <person name="Hauser H."/>
            <person name="James K.D."/>
            <person name="Quiles M."/>
            <person name="Madan Babu M."/>
            <person name="Saito T."/>
            <person name="Buchrieser C."/>
            <person name="Wardroper A."/>
            <person name="Felder M."/>
            <person name="Thangavelu M."/>
            <person name="Johnson D."/>
            <person name="Knights A."/>
            <person name="Loulseged H."/>
            <person name="Mungall K.L."/>
            <person name="Oliver K."/>
            <person name="Price C."/>
            <person name="Quail M.A."/>
            <person name="Urushihara H."/>
            <person name="Hernandez J."/>
            <person name="Rabbinowitsch E."/>
            <person name="Steffen D."/>
            <person name="Sanders M."/>
            <person name="Ma J."/>
            <person name="Kohara Y."/>
            <person name="Sharp S."/>
            <person name="Simmonds M.N."/>
            <person name="Spiegler S."/>
            <person name="Tivey A."/>
            <person name="Sugano S."/>
            <person name="White B."/>
            <person name="Walker D."/>
            <person name="Woodward J.R."/>
            <person name="Winckler T."/>
            <person name="Tanaka Y."/>
            <person name="Shaulsky G."/>
            <person name="Schleicher M."/>
            <person name="Weinstock G.M."/>
            <person name="Rosenthal A."/>
            <person name="Cox E.C."/>
            <person name="Chisholm R.L."/>
            <person name="Gibbs R.A."/>
            <person name="Loomis W.F."/>
            <person name="Platzer M."/>
            <person name="Kay R.R."/>
            <person name="Williams J.G."/>
            <person name="Dear P.H."/>
            <person name="Noegel A.A."/>
            <person name="Barrell B.G."/>
            <person name="Kuspa A."/>
        </authorList>
    </citation>
    <scope>NUCLEOTIDE SEQUENCE [LARGE SCALE GENOMIC DNA]</scope>
    <source>
        <strain>AX4</strain>
    </source>
</reference>
<dbReference type="EC" id="3.6.5.-" evidence="1"/>
<dbReference type="EMBL" id="AAFI02000005">
    <property type="protein sequence ID" value="EAL72591.1"/>
    <property type="molecule type" value="Genomic_DNA"/>
</dbReference>
<dbReference type="RefSeq" id="XP_645887.1">
    <property type="nucleotide sequence ID" value="XM_640795.1"/>
</dbReference>
<dbReference type="SMR" id="Q55E94"/>
<dbReference type="FunCoup" id="Q55E94">
    <property type="interactions" value="693"/>
</dbReference>
<dbReference type="STRING" id="44689.Q55E94"/>
<dbReference type="PaxDb" id="44689-DDB0234169"/>
<dbReference type="EnsemblProtists" id="EAL72591">
    <property type="protein sequence ID" value="EAL72591"/>
    <property type="gene ID" value="DDB_G0270482"/>
</dbReference>
<dbReference type="GeneID" id="8616829"/>
<dbReference type="KEGG" id="ddi:DDB_G0270482"/>
<dbReference type="dictyBase" id="DDB_G0270482">
    <property type="gene designation" value="gfm1"/>
</dbReference>
<dbReference type="VEuPathDB" id="AmoebaDB:DDB_G0270482"/>
<dbReference type="eggNOG" id="KOG0465">
    <property type="taxonomic scope" value="Eukaryota"/>
</dbReference>
<dbReference type="HOGENOM" id="CLU_002794_4_0_1"/>
<dbReference type="InParanoid" id="Q55E94"/>
<dbReference type="OMA" id="GQFAKVQ"/>
<dbReference type="PhylomeDB" id="Q55E94"/>
<dbReference type="UniPathway" id="UPA00345"/>
<dbReference type="PRO" id="PR:Q55E94"/>
<dbReference type="Proteomes" id="UP000002195">
    <property type="component" value="Chromosome 1"/>
</dbReference>
<dbReference type="GO" id="GO:0005739">
    <property type="term" value="C:mitochondrion"/>
    <property type="evidence" value="ECO:0000250"/>
    <property type="project" value="dictyBase"/>
</dbReference>
<dbReference type="GO" id="GO:0005525">
    <property type="term" value="F:GTP binding"/>
    <property type="evidence" value="ECO:0007669"/>
    <property type="project" value="UniProtKB-UniRule"/>
</dbReference>
<dbReference type="GO" id="GO:0003924">
    <property type="term" value="F:GTPase activity"/>
    <property type="evidence" value="ECO:0000318"/>
    <property type="project" value="GO_Central"/>
</dbReference>
<dbReference type="GO" id="GO:0003746">
    <property type="term" value="F:translation elongation factor activity"/>
    <property type="evidence" value="ECO:0000318"/>
    <property type="project" value="GO_Central"/>
</dbReference>
<dbReference type="GO" id="GO:0032543">
    <property type="term" value="P:mitochondrial translation"/>
    <property type="evidence" value="ECO:0000250"/>
    <property type="project" value="dictyBase"/>
</dbReference>
<dbReference type="GO" id="GO:0070125">
    <property type="term" value="P:mitochondrial translational elongation"/>
    <property type="evidence" value="ECO:0000318"/>
    <property type="project" value="GO_Central"/>
</dbReference>
<dbReference type="CDD" id="cd01886">
    <property type="entry name" value="EF-G"/>
    <property type="match status" value="1"/>
</dbReference>
<dbReference type="CDD" id="cd16262">
    <property type="entry name" value="EFG_III"/>
    <property type="match status" value="1"/>
</dbReference>
<dbReference type="CDD" id="cd01434">
    <property type="entry name" value="EFG_mtEFG1_IV"/>
    <property type="match status" value="1"/>
</dbReference>
<dbReference type="CDD" id="cd04097">
    <property type="entry name" value="mtEFG1_C"/>
    <property type="match status" value="1"/>
</dbReference>
<dbReference type="CDD" id="cd04091">
    <property type="entry name" value="mtEFG1_II_like"/>
    <property type="match status" value="1"/>
</dbReference>
<dbReference type="FunFam" id="3.30.230.10:FF:000003">
    <property type="entry name" value="Elongation factor G"/>
    <property type="match status" value="1"/>
</dbReference>
<dbReference type="FunFam" id="3.30.70.240:FF:000001">
    <property type="entry name" value="Elongation factor G"/>
    <property type="match status" value="1"/>
</dbReference>
<dbReference type="FunFam" id="3.30.70.870:FF:000001">
    <property type="entry name" value="Elongation factor G"/>
    <property type="match status" value="1"/>
</dbReference>
<dbReference type="FunFam" id="2.40.30.10:FF:000022">
    <property type="entry name" value="Elongation factor G, mitochondrial"/>
    <property type="match status" value="1"/>
</dbReference>
<dbReference type="FunFam" id="3.40.50.300:FF:004848">
    <property type="entry name" value="Elongation factor G, mitochondrial"/>
    <property type="match status" value="1"/>
</dbReference>
<dbReference type="Gene3D" id="3.30.230.10">
    <property type="match status" value="1"/>
</dbReference>
<dbReference type="Gene3D" id="3.30.70.240">
    <property type="match status" value="1"/>
</dbReference>
<dbReference type="Gene3D" id="3.30.70.870">
    <property type="entry name" value="Elongation Factor G (Translational Gtpase), domain 3"/>
    <property type="match status" value="1"/>
</dbReference>
<dbReference type="Gene3D" id="3.40.50.300">
    <property type="entry name" value="P-loop containing nucleotide triphosphate hydrolases"/>
    <property type="match status" value="1"/>
</dbReference>
<dbReference type="Gene3D" id="2.40.30.10">
    <property type="entry name" value="Translation factors"/>
    <property type="match status" value="1"/>
</dbReference>
<dbReference type="HAMAP" id="MF_00054_B">
    <property type="entry name" value="EF_G_EF_2_B"/>
    <property type="match status" value="1"/>
</dbReference>
<dbReference type="InterPro" id="IPR041095">
    <property type="entry name" value="EFG_II"/>
</dbReference>
<dbReference type="InterPro" id="IPR009022">
    <property type="entry name" value="EFG_III"/>
</dbReference>
<dbReference type="InterPro" id="IPR035647">
    <property type="entry name" value="EFG_III/V"/>
</dbReference>
<dbReference type="InterPro" id="IPR047872">
    <property type="entry name" value="EFG_IV"/>
</dbReference>
<dbReference type="InterPro" id="IPR035649">
    <property type="entry name" value="EFG_V"/>
</dbReference>
<dbReference type="InterPro" id="IPR000640">
    <property type="entry name" value="EFG_V-like"/>
</dbReference>
<dbReference type="InterPro" id="IPR004161">
    <property type="entry name" value="EFTu-like_2"/>
</dbReference>
<dbReference type="InterPro" id="IPR031157">
    <property type="entry name" value="G_TR_CS"/>
</dbReference>
<dbReference type="InterPro" id="IPR027417">
    <property type="entry name" value="P-loop_NTPase"/>
</dbReference>
<dbReference type="InterPro" id="IPR020568">
    <property type="entry name" value="Ribosomal_Su5_D2-typ_SF"/>
</dbReference>
<dbReference type="InterPro" id="IPR014721">
    <property type="entry name" value="Ribsml_uS5_D2-typ_fold_subgr"/>
</dbReference>
<dbReference type="InterPro" id="IPR005225">
    <property type="entry name" value="Small_GTP-bd"/>
</dbReference>
<dbReference type="InterPro" id="IPR000795">
    <property type="entry name" value="T_Tr_GTP-bd_dom"/>
</dbReference>
<dbReference type="InterPro" id="IPR009000">
    <property type="entry name" value="Transl_B-barrel_sf"/>
</dbReference>
<dbReference type="InterPro" id="IPR004540">
    <property type="entry name" value="Transl_elong_EFG/EF2"/>
</dbReference>
<dbReference type="InterPro" id="IPR005517">
    <property type="entry name" value="Transl_elong_EFG/EF2_IV"/>
</dbReference>
<dbReference type="NCBIfam" id="TIGR00484">
    <property type="entry name" value="EF-G"/>
    <property type="match status" value="1"/>
</dbReference>
<dbReference type="NCBIfam" id="NF009381">
    <property type="entry name" value="PRK12740.1-5"/>
    <property type="match status" value="1"/>
</dbReference>
<dbReference type="NCBIfam" id="TIGR00231">
    <property type="entry name" value="small_GTP"/>
    <property type="match status" value="1"/>
</dbReference>
<dbReference type="PANTHER" id="PTHR43636">
    <property type="entry name" value="ELONGATION FACTOR G, MITOCHONDRIAL"/>
    <property type="match status" value="1"/>
</dbReference>
<dbReference type="PANTHER" id="PTHR43636:SF2">
    <property type="entry name" value="ELONGATION FACTOR G, MITOCHONDRIAL"/>
    <property type="match status" value="1"/>
</dbReference>
<dbReference type="Pfam" id="PF00679">
    <property type="entry name" value="EFG_C"/>
    <property type="match status" value="1"/>
</dbReference>
<dbReference type="Pfam" id="PF14492">
    <property type="entry name" value="EFG_III"/>
    <property type="match status" value="1"/>
</dbReference>
<dbReference type="Pfam" id="PF03764">
    <property type="entry name" value="EFG_IV"/>
    <property type="match status" value="1"/>
</dbReference>
<dbReference type="Pfam" id="PF00009">
    <property type="entry name" value="GTP_EFTU"/>
    <property type="match status" value="1"/>
</dbReference>
<dbReference type="Pfam" id="PF03144">
    <property type="entry name" value="GTP_EFTU_D2"/>
    <property type="match status" value="1"/>
</dbReference>
<dbReference type="PRINTS" id="PR00315">
    <property type="entry name" value="ELONGATNFCT"/>
</dbReference>
<dbReference type="SMART" id="SM00838">
    <property type="entry name" value="EFG_C"/>
    <property type="match status" value="1"/>
</dbReference>
<dbReference type="SMART" id="SM00889">
    <property type="entry name" value="EFG_IV"/>
    <property type="match status" value="1"/>
</dbReference>
<dbReference type="SUPFAM" id="SSF54980">
    <property type="entry name" value="EF-G C-terminal domain-like"/>
    <property type="match status" value="2"/>
</dbReference>
<dbReference type="SUPFAM" id="SSF52540">
    <property type="entry name" value="P-loop containing nucleoside triphosphate hydrolases"/>
    <property type="match status" value="1"/>
</dbReference>
<dbReference type="SUPFAM" id="SSF54211">
    <property type="entry name" value="Ribosomal protein S5 domain 2-like"/>
    <property type="match status" value="1"/>
</dbReference>
<dbReference type="SUPFAM" id="SSF50447">
    <property type="entry name" value="Translation proteins"/>
    <property type="match status" value="1"/>
</dbReference>
<dbReference type="PROSITE" id="PS00301">
    <property type="entry name" value="G_TR_1"/>
    <property type="match status" value="1"/>
</dbReference>
<dbReference type="PROSITE" id="PS51722">
    <property type="entry name" value="G_TR_2"/>
    <property type="match status" value="1"/>
</dbReference>
<feature type="transit peptide" description="Mitochondrion" evidence="2">
    <location>
        <begin position="1"/>
        <end position="32"/>
    </location>
</feature>
<feature type="chain" id="PRO_0000327444" description="Elongation factor G, mitochondrial">
    <location>
        <begin position="33"/>
        <end position="734"/>
    </location>
</feature>
<feature type="domain" description="tr-type G">
    <location>
        <begin position="38"/>
        <end position="318"/>
    </location>
</feature>
<feature type="binding site" evidence="2">
    <location>
        <begin position="47"/>
        <end position="54"/>
    </location>
    <ligand>
        <name>GTP</name>
        <dbReference type="ChEBI" id="CHEBI:37565"/>
    </ligand>
</feature>
<feature type="binding site" evidence="2">
    <location>
        <begin position="114"/>
        <end position="118"/>
    </location>
    <ligand>
        <name>GTP</name>
        <dbReference type="ChEBI" id="CHEBI:37565"/>
    </ligand>
</feature>
<feature type="binding site" evidence="2">
    <location>
        <begin position="168"/>
        <end position="171"/>
    </location>
    <ligand>
        <name>GTP</name>
        <dbReference type="ChEBI" id="CHEBI:37565"/>
    </ligand>
</feature>
<protein>
    <recommendedName>
        <fullName evidence="2">Elongation factor G, mitochondrial</fullName>
        <shortName evidence="2">EF-Gmt</shortName>
        <ecNumber evidence="1">3.6.5.-</ecNumber>
    </recommendedName>
    <alternativeName>
        <fullName evidence="2">Elongation factor G 1, mitochondrial</fullName>
        <shortName evidence="2">mEF-G 1</shortName>
    </alternativeName>
    <alternativeName>
        <fullName evidence="2">Elongation factor G1</fullName>
    </alternativeName>
</protein>
<organism>
    <name type="scientific">Dictyostelium discoideum</name>
    <name type="common">Social amoeba</name>
    <dbReference type="NCBI Taxonomy" id="44689"/>
    <lineage>
        <taxon>Eukaryota</taxon>
        <taxon>Amoebozoa</taxon>
        <taxon>Evosea</taxon>
        <taxon>Eumycetozoa</taxon>
        <taxon>Dictyostelia</taxon>
        <taxon>Dictyosteliales</taxon>
        <taxon>Dictyosteliaceae</taxon>
        <taxon>Dictyostelium</taxon>
    </lineage>
</organism>
<proteinExistence type="inferred from homology"/>
<accession>Q55E94</accession>